<keyword id="KW-0067">ATP-binding</keyword>
<keyword id="KW-0963">Cytoplasm</keyword>
<keyword id="KW-0275">Fatty acid biosynthesis</keyword>
<keyword id="KW-0276">Fatty acid metabolism</keyword>
<keyword id="KW-0444">Lipid biosynthesis</keyword>
<keyword id="KW-0443">Lipid metabolism</keyword>
<keyword id="KW-0547">Nucleotide-binding</keyword>
<keyword id="KW-0808">Transferase</keyword>
<proteinExistence type="inferred from homology"/>
<gene>
    <name evidence="1" type="primary">accA</name>
    <name type="ordered locus">PMM0534</name>
</gene>
<evidence type="ECO:0000255" key="1">
    <source>
        <dbReference type="HAMAP-Rule" id="MF_00823"/>
    </source>
</evidence>
<evidence type="ECO:0000255" key="2">
    <source>
        <dbReference type="PROSITE-ProRule" id="PRU01137"/>
    </source>
</evidence>
<sequence>MPRRYLLDFEKPLVELEKQIEQIRELARDSEVDVSQQLLQLETLATRRREEIFRSLTPAQKIQVARHPQRPSTLDFIQMFCDDWIELHGDRNGGDDMALIGGLGSVNNQPVLLLGHQKGRDTKENVVRNFGMAKPGGYRKALRLMQHADRFSLPILTFIDTPGAYAGLSAEEQGQGEAIARNLREMFGFKVPIIATIIGEGGSGGALGIGVADRLLMFEHSVYTVASPEACASILWRDAAKASEAATALKITGKDLLELGVIDEVLSEPAGGNNWAPIEAGNTLKGAIEKHLNELLELKKEELLEQRYSKFRVLGKFVESNNFEEIQEQLPQITE</sequence>
<accession>Q7V2E6</accession>
<organism>
    <name type="scientific">Prochlorococcus marinus subsp. pastoris (strain CCMP1986 / NIES-2087 / MED4)</name>
    <dbReference type="NCBI Taxonomy" id="59919"/>
    <lineage>
        <taxon>Bacteria</taxon>
        <taxon>Bacillati</taxon>
        <taxon>Cyanobacteriota</taxon>
        <taxon>Cyanophyceae</taxon>
        <taxon>Synechococcales</taxon>
        <taxon>Prochlorococcaceae</taxon>
        <taxon>Prochlorococcus</taxon>
    </lineage>
</organism>
<name>ACCA_PROMP</name>
<feature type="chain" id="PRO_0000223804" description="Acetyl-coenzyme A carboxylase carboxyl transferase subunit alpha">
    <location>
        <begin position="1"/>
        <end position="335"/>
    </location>
</feature>
<feature type="domain" description="CoA carboxyltransferase C-terminal" evidence="2">
    <location>
        <begin position="40"/>
        <end position="294"/>
    </location>
</feature>
<dbReference type="EC" id="2.1.3.15" evidence="1"/>
<dbReference type="EMBL" id="BX548174">
    <property type="protein sequence ID" value="CAE18993.1"/>
    <property type="molecule type" value="Genomic_DNA"/>
</dbReference>
<dbReference type="RefSeq" id="WP_011132169.1">
    <property type="nucleotide sequence ID" value="NC_005072.1"/>
</dbReference>
<dbReference type="SMR" id="Q7V2E6"/>
<dbReference type="STRING" id="59919.PMM0534"/>
<dbReference type="KEGG" id="pmm:PMM0534"/>
<dbReference type="eggNOG" id="COG0825">
    <property type="taxonomic scope" value="Bacteria"/>
</dbReference>
<dbReference type="HOGENOM" id="CLU_015486_0_2_3"/>
<dbReference type="OrthoDB" id="9808023at2"/>
<dbReference type="UniPathway" id="UPA00655">
    <property type="reaction ID" value="UER00711"/>
</dbReference>
<dbReference type="Proteomes" id="UP000001026">
    <property type="component" value="Chromosome"/>
</dbReference>
<dbReference type="GO" id="GO:0009317">
    <property type="term" value="C:acetyl-CoA carboxylase complex"/>
    <property type="evidence" value="ECO:0007669"/>
    <property type="project" value="InterPro"/>
</dbReference>
<dbReference type="GO" id="GO:0003989">
    <property type="term" value="F:acetyl-CoA carboxylase activity"/>
    <property type="evidence" value="ECO:0007669"/>
    <property type="project" value="InterPro"/>
</dbReference>
<dbReference type="GO" id="GO:0005524">
    <property type="term" value="F:ATP binding"/>
    <property type="evidence" value="ECO:0007669"/>
    <property type="project" value="UniProtKB-KW"/>
</dbReference>
<dbReference type="GO" id="GO:0016743">
    <property type="term" value="F:carboxyl- or carbamoyltransferase activity"/>
    <property type="evidence" value="ECO:0007669"/>
    <property type="project" value="UniProtKB-UniRule"/>
</dbReference>
<dbReference type="GO" id="GO:0006633">
    <property type="term" value="P:fatty acid biosynthetic process"/>
    <property type="evidence" value="ECO:0007669"/>
    <property type="project" value="UniProtKB-KW"/>
</dbReference>
<dbReference type="GO" id="GO:2001295">
    <property type="term" value="P:malonyl-CoA biosynthetic process"/>
    <property type="evidence" value="ECO:0007669"/>
    <property type="project" value="UniProtKB-UniRule"/>
</dbReference>
<dbReference type="Gene3D" id="3.90.226.10">
    <property type="entry name" value="2-enoyl-CoA Hydratase, Chain A, domain 1"/>
    <property type="match status" value="1"/>
</dbReference>
<dbReference type="HAMAP" id="MF_00823">
    <property type="entry name" value="AcetylCoA_CT_alpha"/>
    <property type="match status" value="1"/>
</dbReference>
<dbReference type="InterPro" id="IPR001095">
    <property type="entry name" value="Acetyl_CoA_COase_a_su"/>
</dbReference>
<dbReference type="InterPro" id="IPR029045">
    <property type="entry name" value="ClpP/crotonase-like_dom_sf"/>
</dbReference>
<dbReference type="InterPro" id="IPR011763">
    <property type="entry name" value="COA_CT_C"/>
</dbReference>
<dbReference type="NCBIfam" id="TIGR00513">
    <property type="entry name" value="accA"/>
    <property type="match status" value="1"/>
</dbReference>
<dbReference type="NCBIfam" id="NF041504">
    <property type="entry name" value="AccA_sub"/>
    <property type="match status" value="1"/>
</dbReference>
<dbReference type="NCBIfam" id="NF004344">
    <property type="entry name" value="PRK05724.1"/>
    <property type="match status" value="1"/>
</dbReference>
<dbReference type="PANTHER" id="PTHR42853">
    <property type="entry name" value="ACETYL-COENZYME A CARBOXYLASE CARBOXYL TRANSFERASE SUBUNIT ALPHA"/>
    <property type="match status" value="1"/>
</dbReference>
<dbReference type="PANTHER" id="PTHR42853:SF3">
    <property type="entry name" value="ACETYL-COENZYME A CARBOXYLASE CARBOXYL TRANSFERASE SUBUNIT ALPHA, CHLOROPLASTIC"/>
    <property type="match status" value="1"/>
</dbReference>
<dbReference type="Pfam" id="PF03255">
    <property type="entry name" value="ACCA"/>
    <property type="match status" value="1"/>
</dbReference>
<dbReference type="PRINTS" id="PR01069">
    <property type="entry name" value="ACCCTRFRASEA"/>
</dbReference>
<dbReference type="SUPFAM" id="SSF52096">
    <property type="entry name" value="ClpP/crotonase"/>
    <property type="match status" value="1"/>
</dbReference>
<dbReference type="PROSITE" id="PS50989">
    <property type="entry name" value="COA_CT_CTER"/>
    <property type="match status" value="1"/>
</dbReference>
<reference key="1">
    <citation type="journal article" date="2003" name="Nature">
        <title>Genome divergence in two Prochlorococcus ecotypes reflects oceanic niche differentiation.</title>
        <authorList>
            <person name="Rocap G."/>
            <person name="Larimer F.W."/>
            <person name="Lamerdin J.E."/>
            <person name="Malfatti S."/>
            <person name="Chain P."/>
            <person name="Ahlgren N.A."/>
            <person name="Arellano A."/>
            <person name="Coleman M."/>
            <person name="Hauser L."/>
            <person name="Hess W.R."/>
            <person name="Johnson Z.I."/>
            <person name="Land M.L."/>
            <person name="Lindell D."/>
            <person name="Post A.F."/>
            <person name="Regala W."/>
            <person name="Shah M."/>
            <person name="Shaw S.L."/>
            <person name="Steglich C."/>
            <person name="Sullivan M.B."/>
            <person name="Ting C.S."/>
            <person name="Tolonen A."/>
            <person name="Webb E.A."/>
            <person name="Zinser E.R."/>
            <person name="Chisholm S.W."/>
        </authorList>
    </citation>
    <scope>NUCLEOTIDE SEQUENCE [LARGE SCALE GENOMIC DNA]</scope>
    <source>
        <strain>CCMP1986 / NIES-2087 / MED4</strain>
    </source>
</reference>
<protein>
    <recommendedName>
        <fullName evidence="1">Acetyl-coenzyme A carboxylase carboxyl transferase subunit alpha</fullName>
        <shortName evidence="1">ACCase subunit alpha</shortName>
        <shortName evidence="1">Acetyl-CoA carboxylase carboxyltransferase subunit alpha</shortName>
        <ecNumber evidence="1">2.1.3.15</ecNumber>
    </recommendedName>
</protein>
<comment type="function">
    <text evidence="1">Component of the acetyl coenzyme A carboxylase (ACC) complex. First, biotin carboxylase catalyzes the carboxylation of biotin on its carrier protein (BCCP) and then the CO(2) group is transferred by the carboxyltransferase to acetyl-CoA to form malonyl-CoA.</text>
</comment>
<comment type="catalytic activity">
    <reaction evidence="1">
        <text>N(6)-carboxybiotinyl-L-lysyl-[protein] + acetyl-CoA = N(6)-biotinyl-L-lysyl-[protein] + malonyl-CoA</text>
        <dbReference type="Rhea" id="RHEA:54728"/>
        <dbReference type="Rhea" id="RHEA-COMP:10505"/>
        <dbReference type="Rhea" id="RHEA-COMP:10506"/>
        <dbReference type="ChEBI" id="CHEBI:57288"/>
        <dbReference type="ChEBI" id="CHEBI:57384"/>
        <dbReference type="ChEBI" id="CHEBI:83144"/>
        <dbReference type="ChEBI" id="CHEBI:83145"/>
        <dbReference type="EC" id="2.1.3.15"/>
    </reaction>
</comment>
<comment type="pathway">
    <text evidence="1">Lipid metabolism; malonyl-CoA biosynthesis; malonyl-CoA from acetyl-CoA: step 1/1.</text>
</comment>
<comment type="subunit">
    <text evidence="1">Acetyl-CoA carboxylase is a heterohexamer composed of biotin carboxyl carrier protein (AccB), biotin carboxylase (AccC) and two subunits each of ACCase subunit alpha (AccA) and ACCase subunit beta (AccD).</text>
</comment>
<comment type="subcellular location">
    <subcellularLocation>
        <location evidence="1">Cytoplasm</location>
    </subcellularLocation>
</comment>
<comment type="similarity">
    <text evidence="1">Belongs to the AccA family.</text>
</comment>